<accession>Q3YS70</accession>
<proteinExistence type="inferred from homology"/>
<sequence>MYHVNRIYPKKELSQCFISSSHITDKIVNYAGNISDYSIIEIGPGLGTMTYSILNKNPKRLISIEKDSRLMPIHKKIVDEFNGKYEFILSDALNIDLRTIIEPPVKIIANLPYHIATPLLMKWINYIDFFTSFTLMFQKEVADRIVAQPNNKNYSILSVLIQLLSNVYKMEDFGPEIFSPQPKVMSSVINIIVLPKPRFNVNHNKLSQVLKVTFGERRKMIRSTLKKLINNTDEILQSLNINNNLRPENLSIEQFCKIANSI</sequence>
<organism>
    <name type="scientific">Ehrlichia canis (strain Jake)</name>
    <dbReference type="NCBI Taxonomy" id="269484"/>
    <lineage>
        <taxon>Bacteria</taxon>
        <taxon>Pseudomonadati</taxon>
        <taxon>Pseudomonadota</taxon>
        <taxon>Alphaproteobacteria</taxon>
        <taxon>Rickettsiales</taxon>
        <taxon>Anaplasmataceae</taxon>
        <taxon>Ehrlichia</taxon>
    </lineage>
</organism>
<feature type="chain" id="PRO_0000257288" description="Ribosomal RNA small subunit methyltransferase A">
    <location>
        <begin position="1"/>
        <end position="262"/>
    </location>
</feature>
<feature type="binding site" evidence="1">
    <location>
        <position position="18"/>
    </location>
    <ligand>
        <name>S-adenosyl-L-methionine</name>
        <dbReference type="ChEBI" id="CHEBI:59789"/>
    </ligand>
</feature>
<feature type="binding site" evidence="1">
    <location>
        <position position="43"/>
    </location>
    <ligand>
        <name>S-adenosyl-L-methionine</name>
        <dbReference type="ChEBI" id="CHEBI:59789"/>
    </ligand>
</feature>
<feature type="binding site" evidence="1">
    <location>
        <position position="65"/>
    </location>
    <ligand>
        <name>S-adenosyl-L-methionine</name>
        <dbReference type="ChEBI" id="CHEBI:59789"/>
    </ligand>
</feature>
<feature type="binding site" evidence="1">
    <location>
        <position position="91"/>
    </location>
    <ligand>
        <name>S-adenosyl-L-methionine</name>
        <dbReference type="ChEBI" id="CHEBI:59789"/>
    </ligand>
</feature>
<feature type="binding site" evidence="1">
    <location>
        <position position="110"/>
    </location>
    <ligand>
        <name>S-adenosyl-L-methionine</name>
        <dbReference type="ChEBI" id="CHEBI:59789"/>
    </ligand>
</feature>
<gene>
    <name evidence="1" type="primary">rsmA</name>
    <name evidence="1" type="synonym">ksgA</name>
    <name type="ordered locus">Ecaj_0392</name>
</gene>
<dbReference type="EC" id="2.1.1.182" evidence="1"/>
<dbReference type="EMBL" id="CP000107">
    <property type="protein sequence ID" value="AAZ68435.1"/>
    <property type="molecule type" value="Genomic_DNA"/>
</dbReference>
<dbReference type="RefSeq" id="WP_011304513.1">
    <property type="nucleotide sequence ID" value="NC_007354.1"/>
</dbReference>
<dbReference type="SMR" id="Q3YS70"/>
<dbReference type="FunCoup" id="Q3YS70">
    <property type="interactions" value="297"/>
</dbReference>
<dbReference type="STRING" id="269484.Ecaj_0392"/>
<dbReference type="KEGG" id="ecn:Ecaj_0392"/>
<dbReference type="eggNOG" id="COG0030">
    <property type="taxonomic scope" value="Bacteria"/>
</dbReference>
<dbReference type="HOGENOM" id="CLU_041220_0_1_5"/>
<dbReference type="InParanoid" id="Q3YS70"/>
<dbReference type="Proteomes" id="UP000000435">
    <property type="component" value="Chromosome"/>
</dbReference>
<dbReference type="GO" id="GO:0005829">
    <property type="term" value="C:cytosol"/>
    <property type="evidence" value="ECO:0007669"/>
    <property type="project" value="TreeGrafter"/>
</dbReference>
<dbReference type="GO" id="GO:0052908">
    <property type="term" value="F:16S rRNA (adenine(1518)-N(6)/adenine(1519)-N(6))-dimethyltransferase activity"/>
    <property type="evidence" value="ECO:0007669"/>
    <property type="project" value="UniProtKB-EC"/>
</dbReference>
<dbReference type="GO" id="GO:0003723">
    <property type="term" value="F:RNA binding"/>
    <property type="evidence" value="ECO:0007669"/>
    <property type="project" value="UniProtKB-KW"/>
</dbReference>
<dbReference type="CDD" id="cd02440">
    <property type="entry name" value="AdoMet_MTases"/>
    <property type="match status" value="1"/>
</dbReference>
<dbReference type="FunFam" id="1.10.8.100:FF:000001">
    <property type="entry name" value="Ribosomal RNA small subunit methyltransferase A"/>
    <property type="match status" value="1"/>
</dbReference>
<dbReference type="Gene3D" id="1.10.8.100">
    <property type="entry name" value="Ribosomal RNA adenine dimethylase-like, domain 2"/>
    <property type="match status" value="1"/>
</dbReference>
<dbReference type="Gene3D" id="3.40.50.150">
    <property type="entry name" value="Vaccinia Virus protein VP39"/>
    <property type="match status" value="1"/>
</dbReference>
<dbReference type="HAMAP" id="MF_00607">
    <property type="entry name" value="16SrRNA_methyltr_A"/>
    <property type="match status" value="1"/>
</dbReference>
<dbReference type="InterPro" id="IPR001737">
    <property type="entry name" value="KsgA/Erm"/>
</dbReference>
<dbReference type="InterPro" id="IPR023165">
    <property type="entry name" value="rRNA_Ade_diMease-like_C"/>
</dbReference>
<dbReference type="InterPro" id="IPR020596">
    <property type="entry name" value="rRNA_Ade_Mease_Trfase_CS"/>
</dbReference>
<dbReference type="InterPro" id="IPR020598">
    <property type="entry name" value="rRNA_Ade_methylase_Trfase_N"/>
</dbReference>
<dbReference type="InterPro" id="IPR011530">
    <property type="entry name" value="rRNA_adenine_dimethylase"/>
</dbReference>
<dbReference type="InterPro" id="IPR029063">
    <property type="entry name" value="SAM-dependent_MTases_sf"/>
</dbReference>
<dbReference type="NCBIfam" id="TIGR00755">
    <property type="entry name" value="ksgA"/>
    <property type="match status" value="1"/>
</dbReference>
<dbReference type="PANTHER" id="PTHR11727">
    <property type="entry name" value="DIMETHYLADENOSINE TRANSFERASE"/>
    <property type="match status" value="1"/>
</dbReference>
<dbReference type="PANTHER" id="PTHR11727:SF7">
    <property type="entry name" value="DIMETHYLADENOSINE TRANSFERASE-RELATED"/>
    <property type="match status" value="1"/>
</dbReference>
<dbReference type="Pfam" id="PF00398">
    <property type="entry name" value="RrnaAD"/>
    <property type="match status" value="1"/>
</dbReference>
<dbReference type="SMART" id="SM00650">
    <property type="entry name" value="rADc"/>
    <property type="match status" value="1"/>
</dbReference>
<dbReference type="SUPFAM" id="SSF53335">
    <property type="entry name" value="S-adenosyl-L-methionine-dependent methyltransferases"/>
    <property type="match status" value="1"/>
</dbReference>
<dbReference type="PROSITE" id="PS01131">
    <property type="entry name" value="RRNA_A_DIMETH"/>
    <property type="match status" value="1"/>
</dbReference>
<dbReference type="PROSITE" id="PS51689">
    <property type="entry name" value="SAM_RNA_A_N6_MT"/>
    <property type="match status" value="1"/>
</dbReference>
<comment type="function">
    <text evidence="1">Specifically dimethylates two adjacent adenosines (A1518 and A1519) in the loop of a conserved hairpin near the 3'-end of 16S rRNA in the 30S particle. May play a critical role in biogenesis of 30S subunits.</text>
</comment>
<comment type="catalytic activity">
    <reaction evidence="1">
        <text>adenosine(1518)/adenosine(1519) in 16S rRNA + 4 S-adenosyl-L-methionine = N(6)-dimethyladenosine(1518)/N(6)-dimethyladenosine(1519) in 16S rRNA + 4 S-adenosyl-L-homocysteine + 4 H(+)</text>
        <dbReference type="Rhea" id="RHEA:19609"/>
        <dbReference type="Rhea" id="RHEA-COMP:10232"/>
        <dbReference type="Rhea" id="RHEA-COMP:10233"/>
        <dbReference type="ChEBI" id="CHEBI:15378"/>
        <dbReference type="ChEBI" id="CHEBI:57856"/>
        <dbReference type="ChEBI" id="CHEBI:59789"/>
        <dbReference type="ChEBI" id="CHEBI:74411"/>
        <dbReference type="ChEBI" id="CHEBI:74493"/>
        <dbReference type="EC" id="2.1.1.182"/>
    </reaction>
</comment>
<comment type="subcellular location">
    <subcellularLocation>
        <location evidence="1">Cytoplasm</location>
    </subcellularLocation>
</comment>
<comment type="similarity">
    <text evidence="1">Belongs to the class I-like SAM-binding methyltransferase superfamily. rRNA adenine N(6)-methyltransferase family. RsmA subfamily.</text>
</comment>
<name>RSMA_EHRCJ</name>
<evidence type="ECO:0000255" key="1">
    <source>
        <dbReference type="HAMAP-Rule" id="MF_00607"/>
    </source>
</evidence>
<protein>
    <recommendedName>
        <fullName evidence="1">Ribosomal RNA small subunit methyltransferase A</fullName>
        <ecNumber evidence="1">2.1.1.182</ecNumber>
    </recommendedName>
    <alternativeName>
        <fullName evidence="1">16S rRNA (adenine(1518)-N(6)/adenine(1519)-N(6))-dimethyltransferase</fullName>
    </alternativeName>
    <alternativeName>
        <fullName evidence="1">16S rRNA dimethyladenosine transferase</fullName>
    </alternativeName>
    <alternativeName>
        <fullName evidence="1">16S rRNA dimethylase</fullName>
    </alternativeName>
    <alternativeName>
        <fullName evidence="1">S-adenosylmethionine-6-N', N'-adenosyl(rRNA) dimethyltransferase</fullName>
    </alternativeName>
</protein>
<reference key="1">
    <citation type="journal article" date="2006" name="J. Bacteriol.">
        <title>The genome of the obligately intracellular bacterium Ehrlichia canis reveals themes of complex membrane structure and immune evasion strategies.</title>
        <authorList>
            <person name="Mavromatis K."/>
            <person name="Doyle C.K."/>
            <person name="Lykidis A."/>
            <person name="Ivanova N."/>
            <person name="Francino M.P."/>
            <person name="Chain P."/>
            <person name="Shin M."/>
            <person name="Malfatti S."/>
            <person name="Larimer F."/>
            <person name="Copeland A."/>
            <person name="Detter J.C."/>
            <person name="Land M."/>
            <person name="Richardson P.M."/>
            <person name="Yu X.J."/>
            <person name="Walker D.H."/>
            <person name="McBride J.W."/>
            <person name="Kyrpides N.C."/>
        </authorList>
    </citation>
    <scope>NUCLEOTIDE SEQUENCE [LARGE SCALE GENOMIC DNA]</scope>
    <source>
        <strain>Jake</strain>
    </source>
</reference>
<keyword id="KW-0963">Cytoplasm</keyword>
<keyword id="KW-0489">Methyltransferase</keyword>
<keyword id="KW-0694">RNA-binding</keyword>
<keyword id="KW-0698">rRNA processing</keyword>
<keyword id="KW-0949">S-adenosyl-L-methionine</keyword>
<keyword id="KW-0808">Transferase</keyword>